<evidence type="ECO:0000255" key="1"/>
<evidence type="ECO:0000305" key="2"/>
<dbReference type="EMBL" id="AF055582">
    <property type="protein sequence ID" value="AAC62224.1"/>
    <property type="molecule type" value="Genomic_DNA"/>
</dbReference>
<dbReference type="EMBL" id="AL591688">
    <property type="protein sequence ID" value="CAC41480.1"/>
    <property type="molecule type" value="Genomic_DNA"/>
</dbReference>
<dbReference type="RefSeq" id="NP_384199.1">
    <property type="nucleotide sequence ID" value="NC_003047.1"/>
</dbReference>
<dbReference type="RefSeq" id="WP_003532523.1">
    <property type="nucleotide sequence ID" value="NC_003047.1"/>
</dbReference>
<dbReference type="SMR" id="O87394"/>
<dbReference type="EnsemblBacteria" id="CAC41480">
    <property type="protein sequence ID" value="CAC41480"/>
    <property type="gene ID" value="SMc02616"/>
</dbReference>
<dbReference type="KEGG" id="sme:SMc02616"/>
<dbReference type="PATRIC" id="fig|266834.11.peg.1450"/>
<dbReference type="eggNOG" id="COG0531">
    <property type="taxonomic scope" value="Bacteria"/>
</dbReference>
<dbReference type="HOGENOM" id="CLU_007946_5_0_5"/>
<dbReference type="OrthoDB" id="9762947at2"/>
<dbReference type="Proteomes" id="UP000001976">
    <property type="component" value="Chromosome"/>
</dbReference>
<dbReference type="GO" id="GO:0005886">
    <property type="term" value="C:plasma membrane"/>
    <property type="evidence" value="ECO:0007669"/>
    <property type="project" value="UniProtKB-SubCell"/>
</dbReference>
<dbReference type="GO" id="GO:0055085">
    <property type="term" value="P:transmembrane transport"/>
    <property type="evidence" value="ECO:0007669"/>
    <property type="project" value="InterPro"/>
</dbReference>
<dbReference type="Gene3D" id="1.20.1740.10">
    <property type="entry name" value="Amino acid/polyamine transporter I"/>
    <property type="match status" value="1"/>
</dbReference>
<dbReference type="InterPro" id="IPR004841">
    <property type="entry name" value="AA-permease/SLC12A_dom"/>
</dbReference>
<dbReference type="InterPro" id="IPR050367">
    <property type="entry name" value="APC_superfamily"/>
</dbReference>
<dbReference type="PANTHER" id="PTHR42770">
    <property type="entry name" value="AMINO ACID TRANSPORTER-RELATED"/>
    <property type="match status" value="1"/>
</dbReference>
<dbReference type="PANTHER" id="PTHR42770:SF7">
    <property type="entry name" value="MEMBRANE PROTEIN"/>
    <property type="match status" value="1"/>
</dbReference>
<dbReference type="Pfam" id="PF00324">
    <property type="entry name" value="AA_permease"/>
    <property type="match status" value="1"/>
</dbReference>
<dbReference type="PIRSF" id="PIRSF006060">
    <property type="entry name" value="AA_transporter"/>
    <property type="match status" value="1"/>
</dbReference>
<reference key="1">
    <citation type="submission" date="1998-03" db="EMBL/GenBank/DDBJ databases">
        <authorList>
            <person name="Powers E.L."/>
            <person name="Vuyyuru V."/>
            <person name="Kahn M.L."/>
        </authorList>
    </citation>
    <scope>NUCLEOTIDE SEQUENCE [GENOMIC DNA]</scope>
    <source>
        <strain>1021</strain>
    </source>
</reference>
<reference key="2">
    <citation type="journal article" date="2001" name="Proc. Natl. Acad. Sci. U.S.A.">
        <title>Analysis of the chromosome sequence of the legume symbiont Sinorhizobium meliloti strain 1021.</title>
        <authorList>
            <person name="Capela D."/>
            <person name="Barloy-Hubler F."/>
            <person name="Gouzy J."/>
            <person name="Bothe G."/>
            <person name="Ampe F."/>
            <person name="Batut J."/>
            <person name="Boistard P."/>
            <person name="Becker A."/>
            <person name="Boutry M."/>
            <person name="Cadieu E."/>
            <person name="Dreano S."/>
            <person name="Gloux S."/>
            <person name="Godrie T."/>
            <person name="Goffeau A."/>
            <person name="Kahn D."/>
            <person name="Kiss E."/>
            <person name="Lelaure V."/>
            <person name="Masuy D."/>
            <person name="Pohl T."/>
            <person name="Portetelle D."/>
            <person name="Puehler A."/>
            <person name="Purnelle B."/>
            <person name="Ramsperger U."/>
            <person name="Renard C."/>
            <person name="Thebault P."/>
            <person name="Vandenbol M."/>
            <person name="Weidner S."/>
            <person name="Galibert F."/>
        </authorList>
    </citation>
    <scope>NUCLEOTIDE SEQUENCE [LARGE SCALE GENOMIC DNA]</scope>
    <source>
        <strain>1021</strain>
    </source>
</reference>
<reference key="3">
    <citation type="journal article" date="2001" name="Science">
        <title>The composite genome of the legume symbiont Sinorhizobium meliloti.</title>
        <authorList>
            <person name="Galibert F."/>
            <person name="Finan T.M."/>
            <person name="Long S.R."/>
            <person name="Puehler A."/>
            <person name="Abola P."/>
            <person name="Ampe F."/>
            <person name="Barloy-Hubler F."/>
            <person name="Barnett M.J."/>
            <person name="Becker A."/>
            <person name="Boistard P."/>
            <person name="Bothe G."/>
            <person name="Boutry M."/>
            <person name="Bowser L."/>
            <person name="Buhrmester J."/>
            <person name="Cadieu E."/>
            <person name="Capela D."/>
            <person name="Chain P."/>
            <person name="Cowie A."/>
            <person name="Davis R.W."/>
            <person name="Dreano S."/>
            <person name="Federspiel N.A."/>
            <person name="Fisher R.F."/>
            <person name="Gloux S."/>
            <person name="Godrie T."/>
            <person name="Goffeau A."/>
            <person name="Golding B."/>
            <person name="Gouzy J."/>
            <person name="Gurjal M."/>
            <person name="Hernandez-Lucas I."/>
            <person name="Hong A."/>
            <person name="Huizar L."/>
            <person name="Hyman R.W."/>
            <person name="Jones T."/>
            <person name="Kahn D."/>
            <person name="Kahn M.L."/>
            <person name="Kalman S."/>
            <person name="Keating D.H."/>
            <person name="Kiss E."/>
            <person name="Komp C."/>
            <person name="Lelaure V."/>
            <person name="Masuy D."/>
            <person name="Palm C."/>
            <person name="Peck M.C."/>
            <person name="Pohl T.M."/>
            <person name="Portetelle D."/>
            <person name="Purnelle B."/>
            <person name="Ramsperger U."/>
            <person name="Surzycki R."/>
            <person name="Thebault P."/>
            <person name="Vandenbol M."/>
            <person name="Vorhoelter F.J."/>
            <person name="Weidner S."/>
            <person name="Wells D.H."/>
            <person name="Wong K."/>
            <person name="Yeh K.-C."/>
            <person name="Batut J."/>
        </authorList>
    </citation>
    <scope>NUCLEOTIDE SEQUENCE [LARGE SCALE GENOMIC DNA]</scope>
    <source>
        <strain>1021</strain>
    </source>
</reference>
<name>Y093_RHIME</name>
<organism>
    <name type="scientific">Rhizobium meliloti (strain 1021)</name>
    <name type="common">Ensifer meliloti</name>
    <name type="synonym">Sinorhizobium meliloti</name>
    <dbReference type="NCBI Taxonomy" id="266834"/>
    <lineage>
        <taxon>Bacteria</taxon>
        <taxon>Pseudomonadati</taxon>
        <taxon>Pseudomonadota</taxon>
        <taxon>Alphaproteobacteria</taxon>
        <taxon>Hyphomicrobiales</taxon>
        <taxon>Rhizobiaceae</taxon>
        <taxon>Sinorhizobium/Ensifer group</taxon>
        <taxon>Sinorhizobium</taxon>
    </lineage>
</organism>
<proteinExistence type="inferred from homology"/>
<feature type="chain" id="PRO_0000054228" description="Uncharacterized transporter R00093">
    <location>
        <begin position="1"/>
        <end position="465"/>
    </location>
</feature>
<feature type="transmembrane region" description="Helical" evidence="1">
    <location>
        <begin position="19"/>
        <end position="39"/>
    </location>
</feature>
<feature type="transmembrane region" description="Helical" evidence="1">
    <location>
        <begin position="50"/>
        <end position="70"/>
    </location>
</feature>
<feature type="transmembrane region" description="Helical" evidence="1">
    <location>
        <begin position="91"/>
        <end position="111"/>
    </location>
</feature>
<feature type="transmembrane region" description="Helical" evidence="1">
    <location>
        <begin position="140"/>
        <end position="160"/>
    </location>
</feature>
<feature type="transmembrane region" description="Helical" evidence="1">
    <location>
        <begin position="164"/>
        <end position="184"/>
    </location>
</feature>
<feature type="transmembrane region" description="Helical" evidence="1">
    <location>
        <begin position="201"/>
        <end position="221"/>
    </location>
</feature>
<feature type="transmembrane region" description="Helical" evidence="1">
    <location>
        <begin position="244"/>
        <end position="264"/>
    </location>
</feature>
<feature type="transmembrane region" description="Helical" evidence="1">
    <location>
        <begin position="288"/>
        <end position="308"/>
    </location>
</feature>
<feature type="transmembrane region" description="Helical" evidence="1">
    <location>
        <begin position="342"/>
        <end position="362"/>
    </location>
</feature>
<feature type="transmembrane region" description="Helical" evidence="1">
    <location>
        <begin position="363"/>
        <end position="383"/>
    </location>
</feature>
<feature type="transmembrane region" description="Helical" evidence="1">
    <location>
        <begin position="403"/>
        <end position="423"/>
    </location>
</feature>
<comment type="function">
    <text>Probable amino-acid or metabolite transport protein.</text>
</comment>
<comment type="subcellular location">
    <subcellularLocation>
        <location evidence="2">Cell membrane</location>
        <topology evidence="2">Multi-pass membrane protein</topology>
    </subcellularLocation>
</comment>
<comment type="similarity">
    <text evidence="2">Belongs to the amino acid-polyamine-organocation (APC) superfamily.</text>
</comment>
<protein>
    <recommendedName>
        <fullName>Uncharacterized transporter R00093</fullName>
    </recommendedName>
</protein>
<keyword id="KW-1003">Cell membrane</keyword>
<keyword id="KW-0472">Membrane</keyword>
<keyword id="KW-1185">Reference proteome</keyword>
<keyword id="KW-0812">Transmembrane</keyword>
<keyword id="KW-1133">Transmembrane helix</keyword>
<keyword id="KW-0813">Transport</keyword>
<accession>O87394</accession>
<sequence>MDDTTSAAPEPDRLRLLRVLGPAHVWALGVGIVLVGEYMGWNFSVGKGGMIAGLMACWVAGLLYTCVAMIDSEVTSTVAAAGGQYAQAKHIVGPLMAFNVGLFLVMAYTMLEAANAITVGFLLDTVAGMQGQTGLNQQPFIVLAIMFLAWLNYRGVLATLTFNLVITAIAFLAIVALFVSVQFGASAVPLDFSAITSDPLPYGWVGIVASLHFGLWYYLGIEGTCQAAEEVRSPARSLPYGTMAGIMTLLIAATMTWYICSGLMPWEYLGQAGTPLFDAARVTGSTGLMVLLFVGTAFATLASANGCINDASRAWFSMSRDRYLPSWFGAVHPVYRTPYRAIVFLVPIALIFALGAPLDQVVTFSILSGLLGYTFMTFNMVMFRNKWPLGRIKRGYVHPFHPLPTVVLLILCSTAYFAVFLGYGTQLSAMMCFYIVASLWFHFRRYKFVRRGDQFTMPWPKPHGY</sequence>
<gene>
    <name type="ordered locus">R00093</name>
    <name type="ORF">SMc02616</name>
</gene>